<sequence length="363" mass="40293">MGNIHIQTKSKEYDVYVGKESLSHLTTIVQNMQPSVSNIMIISDEAVASLHLQTVVDALQIDQKVFSFVVPSGEKEKSFENFYAAHTSALENKLDRNSLIIALGGGMIGDLAGFVAASFMRGIRFVQVPTTLLAHDSAVGGKVAINHPLGKNMIGAFHQPEAVVYHTPFLQSLPEKEWRSGYAEVIKHALIGDVKLYHWLKEEVQTLADLRDEKLIHILMKAIPVKANIVAQDETEKGVRAHLNFGHTLGHALEKELGYGNITHGDGVAVGMLFAIFLSEQVYKVNLAYEEMKQWFLNYGYPKMPSDLSVERLVGLMKQDKKANAGTIHMVLMQEYGVVNVVSIPDETVHIALEAFQKDMVEK</sequence>
<accession>C3L8S2</accession>
<feature type="chain" id="PRO_1000119072" description="3-dehydroquinate synthase">
    <location>
        <begin position="1"/>
        <end position="363"/>
    </location>
</feature>
<feature type="binding site" evidence="1">
    <location>
        <begin position="72"/>
        <end position="77"/>
    </location>
    <ligand>
        <name>NAD(+)</name>
        <dbReference type="ChEBI" id="CHEBI:57540"/>
    </ligand>
</feature>
<feature type="binding site" evidence="1">
    <location>
        <begin position="130"/>
        <end position="131"/>
    </location>
    <ligand>
        <name>NAD(+)</name>
        <dbReference type="ChEBI" id="CHEBI:57540"/>
    </ligand>
</feature>
<feature type="binding site" evidence="1">
    <location>
        <position position="142"/>
    </location>
    <ligand>
        <name>NAD(+)</name>
        <dbReference type="ChEBI" id="CHEBI:57540"/>
    </ligand>
</feature>
<feature type="binding site" evidence="1">
    <location>
        <position position="151"/>
    </location>
    <ligand>
        <name>NAD(+)</name>
        <dbReference type="ChEBI" id="CHEBI:57540"/>
    </ligand>
</feature>
<feature type="binding site" evidence="1">
    <location>
        <position position="184"/>
    </location>
    <ligand>
        <name>Zn(2+)</name>
        <dbReference type="ChEBI" id="CHEBI:29105"/>
    </ligand>
</feature>
<feature type="binding site" evidence="1">
    <location>
        <position position="247"/>
    </location>
    <ligand>
        <name>Zn(2+)</name>
        <dbReference type="ChEBI" id="CHEBI:29105"/>
    </ligand>
</feature>
<feature type="binding site" evidence="1">
    <location>
        <position position="264"/>
    </location>
    <ligand>
        <name>Zn(2+)</name>
        <dbReference type="ChEBI" id="CHEBI:29105"/>
    </ligand>
</feature>
<evidence type="ECO:0000255" key="1">
    <source>
        <dbReference type="HAMAP-Rule" id="MF_00110"/>
    </source>
</evidence>
<dbReference type="EC" id="4.2.3.4" evidence="1"/>
<dbReference type="EMBL" id="CP001215">
    <property type="protein sequence ID" value="ACP12113.1"/>
    <property type="molecule type" value="Genomic_DNA"/>
</dbReference>
<dbReference type="RefSeq" id="WP_000526831.1">
    <property type="nucleotide sequence ID" value="NC_012581.1"/>
</dbReference>
<dbReference type="SMR" id="C3L8S2"/>
<dbReference type="GeneID" id="45021512"/>
<dbReference type="KEGG" id="bah:BAMEG_3055"/>
<dbReference type="HOGENOM" id="CLU_001201_0_2_9"/>
<dbReference type="UniPathway" id="UPA00053">
    <property type="reaction ID" value="UER00085"/>
</dbReference>
<dbReference type="GO" id="GO:0005737">
    <property type="term" value="C:cytoplasm"/>
    <property type="evidence" value="ECO:0007669"/>
    <property type="project" value="UniProtKB-SubCell"/>
</dbReference>
<dbReference type="GO" id="GO:0003856">
    <property type="term" value="F:3-dehydroquinate synthase activity"/>
    <property type="evidence" value="ECO:0007669"/>
    <property type="project" value="UniProtKB-UniRule"/>
</dbReference>
<dbReference type="GO" id="GO:0046872">
    <property type="term" value="F:metal ion binding"/>
    <property type="evidence" value="ECO:0007669"/>
    <property type="project" value="UniProtKB-KW"/>
</dbReference>
<dbReference type="GO" id="GO:0000166">
    <property type="term" value="F:nucleotide binding"/>
    <property type="evidence" value="ECO:0007669"/>
    <property type="project" value="UniProtKB-KW"/>
</dbReference>
<dbReference type="GO" id="GO:0008652">
    <property type="term" value="P:amino acid biosynthetic process"/>
    <property type="evidence" value="ECO:0007669"/>
    <property type="project" value="UniProtKB-KW"/>
</dbReference>
<dbReference type="GO" id="GO:0009073">
    <property type="term" value="P:aromatic amino acid family biosynthetic process"/>
    <property type="evidence" value="ECO:0007669"/>
    <property type="project" value="UniProtKB-KW"/>
</dbReference>
<dbReference type="GO" id="GO:0009423">
    <property type="term" value="P:chorismate biosynthetic process"/>
    <property type="evidence" value="ECO:0007669"/>
    <property type="project" value="UniProtKB-UniRule"/>
</dbReference>
<dbReference type="CDD" id="cd08195">
    <property type="entry name" value="DHQS"/>
    <property type="match status" value="1"/>
</dbReference>
<dbReference type="FunFam" id="1.20.1090.10:FF:000008">
    <property type="entry name" value="3-dehydroquinate synthase"/>
    <property type="match status" value="1"/>
</dbReference>
<dbReference type="FunFam" id="3.40.50.1970:FF:000001">
    <property type="entry name" value="3-dehydroquinate synthase"/>
    <property type="match status" value="1"/>
</dbReference>
<dbReference type="Gene3D" id="3.40.50.1970">
    <property type="match status" value="1"/>
</dbReference>
<dbReference type="Gene3D" id="1.20.1090.10">
    <property type="entry name" value="Dehydroquinate synthase-like - alpha domain"/>
    <property type="match status" value="1"/>
</dbReference>
<dbReference type="HAMAP" id="MF_00110">
    <property type="entry name" value="DHQ_synthase"/>
    <property type="match status" value="1"/>
</dbReference>
<dbReference type="InterPro" id="IPR050071">
    <property type="entry name" value="Dehydroquinate_synthase"/>
</dbReference>
<dbReference type="InterPro" id="IPR016037">
    <property type="entry name" value="DHQ_synth_AroB"/>
</dbReference>
<dbReference type="InterPro" id="IPR030963">
    <property type="entry name" value="DHQ_synth_fam"/>
</dbReference>
<dbReference type="InterPro" id="IPR030960">
    <property type="entry name" value="DHQS/DOIS_N"/>
</dbReference>
<dbReference type="InterPro" id="IPR056179">
    <property type="entry name" value="DHQS_C"/>
</dbReference>
<dbReference type="NCBIfam" id="TIGR01357">
    <property type="entry name" value="aroB"/>
    <property type="match status" value="1"/>
</dbReference>
<dbReference type="PANTHER" id="PTHR43622">
    <property type="entry name" value="3-DEHYDROQUINATE SYNTHASE"/>
    <property type="match status" value="1"/>
</dbReference>
<dbReference type="PANTHER" id="PTHR43622:SF7">
    <property type="entry name" value="3-DEHYDROQUINATE SYNTHASE, CHLOROPLASTIC"/>
    <property type="match status" value="1"/>
</dbReference>
<dbReference type="Pfam" id="PF01761">
    <property type="entry name" value="DHQ_synthase"/>
    <property type="match status" value="1"/>
</dbReference>
<dbReference type="Pfam" id="PF24621">
    <property type="entry name" value="DHQS_C"/>
    <property type="match status" value="1"/>
</dbReference>
<dbReference type="PIRSF" id="PIRSF001455">
    <property type="entry name" value="DHQ_synth"/>
    <property type="match status" value="1"/>
</dbReference>
<dbReference type="SUPFAM" id="SSF56796">
    <property type="entry name" value="Dehydroquinate synthase-like"/>
    <property type="match status" value="1"/>
</dbReference>
<organism>
    <name type="scientific">Bacillus anthracis (strain CDC 684 / NRRL 3495)</name>
    <dbReference type="NCBI Taxonomy" id="568206"/>
    <lineage>
        <taxon>Bacteria</taxon>
        <taxon>Bacillati</taxon>
        <taxon>Bacillota</taxon>
        <taxon>Bacilli</taxon>
        <taxon>Bacillales</taxon>
        <taxon>Bacillaceae</taxon>
        <taxon>Bacillus</taxon>
        <taxon>Bacillus cereus group</taxon>
    </lineage>
</organism>
<proteinExistence type="inferred from homology"/>
<reference key="1">
    <citation type="submission" date="2008-10" db="EMBL/GenBank/DDBJ databases">
        <title>Genome sequence of Bacillus anthracis str. CDC 684.</title>
        <authorList>
            <person name="Dodson R.J."/>
            <person name="Munk A.C."/>
            <person name="Brettin T."/>
            <person name="Bruce D."/>
            <person name="Detter C."/>
            <person name="Tapia R."/>
            <person name="Han C."/>
            <person name="Sutton G."/>
            <person name="Sims D."/>
        </authorList>
    </citation>
    <scope>NUCLEOTIDE SEQUENCE [LARGE SCALE GENOMIC DNA]</scope>
    <source>
        <strain>CDC 684 / NRRL 3495</strain>
    </source>
</reference>
<gene>
    <name evidence="1" type="primary">aroB</name>
    <name type="ordered locus">BAMEG_3055</name>
</gene>
<protein>
    <recommendedName>
        <fullName evidence="1">3-dehydroquinate synthase</fullName>
        <shortName evidence="1">DHQS</shortName>
        <ecNumber evidence="1">4.2.3.4</ecNumber>
    </recommendedName>
</protein>
<keyword id="KW-0028">Amino-acid biosynthesis</keyword>
<keyword id="KW-0057">Aromatic amino acid biosynthesis</keyword>
<keyword id="KW-0170">Cobalt</keyword>
<keyword id="KW-0963">Cytoplasm</keyword>
<keyword id="KW-0456">Lyase</keyword>
<keyword id="KW-0479">Metal-binding</keyword>
<keyword id="KW-0520">NAD</keyword>
<keyword id="KW-0547">Nucleotide-binding</keyword>
<keyword id="KW-0862">Zinc</keyword>
<name>AROB_BACAC</name>
<comment type="function">
    <text evidence="1">Catalyzes the conversion of 3-deoxy-D-arabino-heptulosonate 7-phosphate (DAHP) to dehydroquinate (DHQ).</text>
</comment>
<comment type="catalytic activity">
    <reaction evidence="1">
        <text>7-phospho-2-dehydro-3-deoxy-D-arabino-heptonate = 3-dehydroquinate + phosphate</text>
        <dbReference type="Rhea" id="RHEA:21968"/>
        <dbReference type="ChEBI" id="CHEBI:32364"/>
        <dbReference type="ChEBI" id="CHEBI:43474"/>
        <dbReference type="ChEBI" id="CHEBI:58394"/>
        <dbReference type="EC" id="4.2.3.4"/>
    </reaction>
</comment>
<comment type="cofactor">
    <cofactor evidence="1">
        <name>Co(2+)</name>
        <dbReference type="ChEBI" id="CHEBI:48828"/>
    </cofactor>
    <cofactor evidence="1">
        <name>Zn(2+)</name>
        <dbReference type="ChEBI" id="CHEBI:29105"/>
    </cofactor>
    <text evidence="1">Binds 1 divalent metal cation per subunit. Can use either Co(2+) or Zn(2+).</text>
</comment>
<comment type="cofactor">
    <cofactor evidence="1">
        <name>NAD(+)</name>
        <dbReference type="ChEBI" id="CHEBI:57540"/>
    </cofactor>
</comment>
<comment type="pathway">
    <text evidence="1">Metabolic intermediate biosynthesis; chorismate biosynthesis; chorismate from D-erythrose 4-phosphate and phosphoenolpyruvate: step 2/7.</text>
</comment>
<comment type="subcellular location">
    <subcellularLocation>
        <location evidence="1">Cytoplasm</location>
    </subcellularLocation>
</comment>
<comment type="similarity">
    <text evidence="1">Belongs to the sugar phosphate cyclases superfamily. Dehydroquinate synthase family.</text>
</comment>